<feature type="chain" id="PRO_0000077388" description="COMM domain-containing protein 2">
    <location>
        <begin position="1"/>
        <end position="199"/>
    </location>
</feature>
<feature type="domain" description="COMM" evidence="2">
    <location>
        <begin position="123"/>
        <end position="190"/>
    </location>
</feature>
<protein>
    <recommendedName>
        <fullName>COMM domain-containing protein 2</fullName>
    </recommendedName>
</protein>
<proteinExistence type="evidence at transcript level"/>
<gene>
    <name type="primary">COMMD2</name>
</gene>
<comment type="function">
    <text evidence="1">Scaffold protein in the commander complex that is essential for endosomal recycling of transmembrane cargos; the commander complex is composed of the CCC subcomplex and the retriever subcomplex (By similarity). May modulate activity of cullin-RING E3 ubiquitin ligase (CRL) complexes (By similarity). May down-regulate activation of NF-kappa-B (By similarity).</text>
</comment>
<comment type="subunit">
    <text evidence="1">Component of the commander complex consisting of the CCC subcomplex and the retriever subcomplex (By similarity). Component of the CCC (COMMD/CCDC22/CCDC93) subcomplex consisting of COMMD1, COMMD2, COMMD3, COMMD4, COMMD5, COMMD6, COMMD7, COMMD8, COMMD9, COMMD10, CCDC22 and CCDC93; within the complex forms a heterodimer with COMMD3 (By similarity). Interacts with RELA, RELB, NFKB1/p105, NFKB2/p100. Interacts with CCDC22, CCDC93, SCNN1B, CUL3, CUL4B, CUL5, CUL7 (By similarity).</text>
</comment>
<comment type="subcellular location">
    <subcellularLocation>
        <location evidence="1">Cytoplasm</location>
    </subcellularLocation>
</comment>
<comment type="similarity">
    <text evidence="3">Belongs to the COMM domain-containing protein 2 family.</text>
</comment>
<reference key="1">
    <citation type="submission" date="2004-11" db="EMBL/GenBank/DDBJ databases">
        <authorList>
            <consortium name="The German cDNA consortium"/>
        </authorList>
    </citation>
    <scope>NUCLEOTIDE SEQUENCE [LARGE SCALE MRNA]</scope>
    <source>
        <tissue>Brain cortex</tissue>
    </source>
</reference>
<name>COMD2_PONAB</name>
<dbReference type="EMBL" id="CR860690">
    <property type="protein sequence ID" value="CAH92806.1"/>
    <property type="molecule type" value="mRNA"/>
</dbReference>
<dbReference type="RefSeq" id="NP_001126637.1">
    <property type="nucleotide sequence ID" value="NM_001133165.1"/>
</dbReference>
<dbReference type="SMR" id="Q5R610"/>
<dbReference type="STRING" id="9601.ENSPPYP00000015880"/>
<dbReference type="Ensembl" id="ENSPPYT00000016509.3">
    <property type="protein sequence ID" value="ENSPPYP00000015880.3"/>
    <property type="gene ID" value="ENSPPYG00000014200.3"/>
</dbReference>
<dbReference type="GeneID" id="100173635"/>
<dbReference type="KEGG" id="pon:100173635"/>
<dbReference type="CTD" id="51122"/>
<dbReference type="eggNOG" id="ENOG502QU0W">
    <property type="taxonomic scope" value="Eukaryota"/>
</dbReference>
<dbReference type="GeneTree" id="ENSGT00390000008489"/>
<dbReference type="InParanoid" id="Q5R610"/>
<dbReference type="OMA" id="NGDHNTQ"/>
<dbReference type="OrthoDB" id="10257479at2759"/>
<dbReference type="Proteomes" id="UP000001595">
    <property type="component" value="Chromosome 3"/>
</dbReference>
<dbReference type="GO" id="GO:0005737">
    <property type="term" value="C:cytoplasm"/>
    <property type="evidence" value="ECO:0007669"/>
    <property type="project" value="UniProtKB-SubCell"/>
</dbReference>
<dbReference type="CDD" id="cd04750">
    <property type="entry name" value="Commd2"/>
    <property type="match status" value="1"/>
</dbReference>
<dbReference type="InterPro" id="IPR017920">
    <property type="entry name" value="COMM"/>
</dbReference>
<dbReference type="InterPro" id="IPR037354">
    <property type="entry name" value="Commd2"/>
</dbReference>
<dbReference type="PANTHER" id="PTHR15857">
    <property type="entry name" value="COMM DOMAIN CONTAINING PROTEIN 2"/>
    <property type="match status" value="1"/>
</dbReference>
<dbReference type="PANTHER" id="PTHR15857:SF0">
    <property type="entry name" value="COMM DOMAIN-CONTAINING PROTEIN 2"/>
    <property type="match status" value="1"/>
</dbReference>
<dbReference type="Pfam" id="PF07258">
    <property type="entry name" value="COMM_domain"/>
    <property type="match status" value="1"/>
</dbReference>
<dbReference type="Pfam" id="PF21672">
    <property type="entry name" value="COMM_HN"/>
    <property type="match status" value="1"/>
</dbReference>
<dbReference type="PROSITE" id="PS51269">
    <property type="entry name" value="COMM"/>
    <property type="match status" value="1"/>
</dbReference>
<sequence>MLLELSEEHKEHLAFLPQVDSSVVAEFGRIAVEFLRRGANPKIYEGAARKLNVSSDTVQHGVEGLTYLLTESSKLMISELDFQDSVFVLGFSEELNKLLLQLYLDNRKEIRMILSELAPSLPSYHNLEWRLDVQLASRSLRQQIKPAVTIKLHLNQNGDHNTKILQTDPATLLHLVQQLEQALEEMKTNHCRRVVRNIK</sequence>
<organism>
    <name type="scientific">Pongo abelii</name>
    <name type="common">Sumatran orangutan</name>
    <name type="synonym">Pongo pygmaeus abelii</name>
    <dbReference type="NCBI Taxonomy" id="9601"/>
    <lineage>
        <taxon>Eukaryota</taxon>
        <taxon>Metazoa</taxon>
        <taxon>Chordata</taxon>
        <taxon>Craniata</taxon>
        <taxon>Vertebrata</taxon>
        <taxon>Euteleostomi</taxon>
        <taxon>Mammalia</taxon>
        <taxon>Eutheria</taxon>
        <taxon>Euarchontoglires</taxon>
        <taxon>Primates</taxon>
        <taxon>Haplorrhini</taxon>
        <taxon>Catarrhini</taxon>
        <taxon>Hominidae</taxon>
        <taxon>Pongo</taxon>
    </lineage>
</organism>
<keyword id="KW-0963">Cytoplasm</keyword>
<keyword id="KW-1185">Reference proteome</keyword>
<keyword id="KW-0804">Transcription</keyword>
<keyword id="KW-0805">Transcription regulation</keyword>
<keyword id="KW-0833">Ubl conjugation pathway</keyword>
<evidence type="ECO:0000250" key="1">
    <source>
        <dbReference type="UniProtKB" id="Q86X83"/>
    </source>
</evidence>
<evidence type="ECO:0000255" key="2">
    <source>
        <dbReference type="PROSITE-ProRule" id="PRU00602"/>
    </source>
</evidence>
<evidence type="ECO:0000305" key="3"/>
<accession>Q5R610</accession>